<comment type="function">
    <text evidence="1">The glycine cleavage system catalyzes the degradation of glycine. The P protein binds the alpha-amino group of glycine through its pyridoxal phosphate cofactor; CO(2) is released and the remaining methylamine moiety is then transferred to the lipoamide cofactor of the H protein (By similarity).</text>
</comment>
<comment type="catalytic activity">
    <reaction>
        <text>N(6)-[(R)-lipoyl]-L-lysyl-[glycine-cleavage complex H protein] + glycine + H(+) = N(6)-[(R)-S(8)-aminomethyldihydrolipoyl]-L-lysyl-[glycine-cleavage complex H protein] + CO2</text>
        <dbReference type="Rhea" id="RHEA:24304"/>
        <dbReference type="Rhea" id="RHEA-COMP:10494"/>
        <dbReference type="Rhea" id="RHEA-COMP:10495"/>
        <dbReference type="ChEBI" id="CHEBI:15378"/>
        <dbReference type="ChEBI" id="CHEBI:16526"/>
        <dbReference type="ChEBI" id="CHEBI:57305"/>
        <dbReference type="ChEBI" id="CHEBI:83099"/>
        <dbReference type="ChEBI" id="CHEBI:83143"/>
        <dbReference type="EC" id="1.4.4.2"/>
    </reaction>
</comment>
<comment type="cofactor">
    <cofactor evidence="1">
        <name>pyridoxal 5'-phosphate</name>
        <dbReference type="ChEBI" id="CHEBI:597326"/>
    </cofactor>
</comment>
<comment type="subunit">
    <text evidence="1">The glycine cleavage system is composed of four proteins: P, T, L and H.</text>
</comment>
<comment type="similarity">
    <text evidence="2">Belongs to the GcvP family.</text>
</comment>
<name>GCSP_MYCTO</name>
<reference key="1">
    <citation type="journal article" date="2002" name="J. Bacteriol.">
        <title>Whole-genome comparison of Mycobacterium tuberculosis clinical and laboratory strains.</title>
        <authorList>
            <person name="Fleischmann R.D."/>
            <person name="Alland D."/>
            <person name="Eisen J.A."/>
            <person name="Carpenter L."/>
            <person name="White O."/>
            <person name="Peterson J.D."/>
            <person name="DeBoy R.T."/>
            <person name="Dodson R.J."/>
            <person name="Gwinn M.L."/>
            <person name="Haft D.H."/>
            <person name="Hickey E.K."/>
            <person name="Kolonay J.F."/>
            <person name="Nelson W.C."/>
            <person name="Umayam L.A."/>
            <person name="Ermolaeva M.D."/>
            <person name="Salzberg S.L."/>
            <person name="Delcher A."/>
            <person name="Utterback T.R."/>
            <person name="Weidman J.F."/>
            <person name="Khouri H.M."/>
            <person name="Gill J."/>
            <person name="Mikula A."/>
            <person name="Bishai W."/>
            <person name="Jacobs W.R. Jr."/>
            <person name="Venter J.C."/>
            <person name="Fraser C.M."/>
        </authorList>
    </citation>
    <scope>NUCLEOTIDE SEQUENCE [LARGE SCALE GENOMIC DNA]</scope>
    <source>
        <strain>CDC 1551 / Oshkosh</strain>
    </source>
</reference>
<evidence type="ECO:0000250" key="1"/>
<evidence type="ECO:0000305" key="2"/>
<keyword id="KW-0560">Oxidoreductase</keyword>
<keyword id="KW-0663">Pyridoxal phosphate</keyword>
<keyword id="KW-1185">Reference proteome</keyword>
<accession>P9WN52</accession>
<accession>L0T810</accession>
<accession>Q50601</accession>
<feature type="chain" id="PRO_0000427187" description="Probable glycine dehydrogenase (decarboxylating)">
    <location>
        <begin position="1"/>
        <end position="941"/>
    </location>
</feature>
<feature type="modified residue" description="N6-(pyridoxal phosphate)lysine" evidence="1">
    <location>
        <position position="692"/>
    </location>
</feature>
<organism>
    <name type="scientific">Mycobacterium tuberculosis (strain CDC 1551 / Oshkosh)</name>
    <dbReference type="NCBI Taxonomy" id="83331"/>
    <lineage>
        <taxon>Bacteria</taxon>
        <taxon>Bacillati</taxon>
        <taxon>Actinomycetota</taxon>
        <taxon>Actinomycetes</taxon>
        <taxon>Mycobacteriales</taxon>
        <taxon>Mycobacteriaceae</taxon>
        <taxon>Mycobacterium</taxon>
        <taxon>Mycobacterium tuberculosis complex</taxon>
    </lineage>
</organism>
<sequence length="941" mass="99511">MSDHSTFADRHIGLDSQAVATMLAVIGVDSLDDLAVKAVPAGILDTLTDTGAAPGLDSLPPAASEAEALAELRALADANTVAVSMIGQGYYDTHTPPVLLRNIIENPAWYTAYTPYQPEISQGRLEALLNFQTLVTDLTGLEIANASMLDEGTAAAEAMTLMHRAARGPVKRVVVDADVFTQTAAVLATRAKPLGIEIVTADLRAGLPDGEFFGVIAQLPGASGRITDWSALVQQAHDRGALVAVGADLLALTLIAPPGEIGADVAFGTTQRFGVPMGFGGPHAGYLAVHAKHARQLPGRLVGVSVDSDGTPAYRLALQTREQHIRRDKATSNICTAQVLLAVLAAMYASYHGAGGLTAIARRVHAHAEAIAGALGDALVHDKYFDTVLARVPGRADEVLARAKANGINLWRVDADHVSVACDEATTDTHVAVVLDAFGVAAAAPAHTDIATRTSEFLTHPAFTQYRTETSMMRYLRALADKDIALDRSMIPLGSCTMKLNAAAEMESITWPEFGRQHPFAPASDTAGLRQLVADLQSWLVLITGYDAVSLQPNAGSQGEYAGLLAIHEYHASRGEPHRDICLIPSSAHGTNAASAALAGMRVVVVDCHDNGDVDLDDLRAKVGEHAERLSALMITYPSTHGVYEHDIAEICAAVHDAGGQVYVDGANLNALVGLARPGKFGGDVSHLNLHKTFCIPHGGGGPGVGPVAVRAHLAPFLPGHPFAPELPKGYPVSSAPYGSASILPITWAYIRMMGAEGLRAASLTAITSANYIARRLDEYYPVLYTGENGMVAHECILDLRGITKLTGITVDDVAKRLADYGFHAPTMSFPVAGTLMVEPTESESLAEVDAFCEAMIGIRAEIDKVGAGEWPVDDNPLRGAPHTAQCLLASDWDHPYTREQAAYPLGTAFRPKVWPAVRRIDGAYGDRNLVCSCPPVEAFA</sequence>
<gene>
    <name type="primary">gcvP</name>
    <name type="synonym">gcvB</name>
    <name type="ordered locus">MT1880</name>
</gene>
<proteinExistence type="inferred from homology"/>
<protein>
    <recommendedName>
        <fullName>Probable glycine dehydrogenase (decarboxylating)</fullName>
        <ecNumber>1.4.4.2</ecNumber>
    </recommendedName>
    <alternativeName>
        <fullName>Glycine cleavage system P-protein</fullName>
    </alternativeName>
    <alternativeName>
        <fullName>Glycine decarboxylase</fullName>
    </alternativeName>
    <alternativeName>
        <fullName>Glycine dehydrogenase (aminomethyl-transferring)</fullName>
    </alternativeName>
</protein>
<dbReference type="EC" id="1.4.4.2"/>
<dbReference type="EMBL" id="AE000516">
    <property type="protein sequence ID" value="AAK46152.1"/>
    <property type="molecule type" value="Genomic_DNA"/>
</dbReference>
<dbReference type="PIR" id="A70722">
    <property type="entry name" value="A70722"/>
</dbReference>
<dbReference type="RefSeq" id="WP_003900418.1">
    <property type="nucleotide sequence ID" value="NZ_KK341227.1"/>
</dbReference>
<dbReference type="SMR" id="P9WN52"/>
<dbReference type="KEGG" id="mtc:MT1880"/>
<dbReference type="PATRIC" id="fig|83331.31.peg.2023"/>
<dbReference type="HOGENOM" id="CLU_004620_2_2_11"/>
<dbReference type="Proteomes" id="UP000001020">
    <property type="component" value="Chromosome"/>
</dbReference>
<dbReference type="GO" id="GO:0005829">
    <property type="term" value="C:cytosol"/>
    <property type="evidence" value="ECO:0007669"/>
    <property type="project" value="TreeGrafter"/>
</dbReference>
<dbReference type="GO" id="GO:0005960">
    <property type="term" value="C:glycine cleavage complex"/>
    <property type="evidence" value="ECO:0007669"/>
    <property type="project" value="TreeGrafter"/>
</dbReference>
<dbReference type="GO" id="GO:0016594">
    <property type="term" value="F:glycine binding"/>
    <property type="evidence" value="ECO:0007669"/>
    <property type="project" value="TreeGrafter"/>
</dbReference>
<dbReference type="GO" id="GO:0004375">
    <property type="term" value="F:glycine dehydrogenase (decarboxylating) activity"/>
    <property type="evidence" value="ECO:0007669"/>
    <property type="project" value="UniProtKB-EC"/>
</dbReference>
<dbReference type="GO" id="GO:0030170">
    <property type="term" value="F:pyridoxal phosphate binding"/>
    <property type="evidence" value="ECO:0007669"/>
    <property type="project" value="TreeGrafter"/>
</dbReference>
<dbReference type="GO" id="GO:0019464">
    <property type="term" value="P:glycine decarboxylation via glycine cleavage system"/>
    <property type="evidence" value="ECO:0007669"/>
    <property type="project" value="UniProtKB-UniRule"/>
</dbReference>
<dbReference type="CDD" id="cd00613">
    <property type="entry name" value="GDC-P"/>
    <property type="match status" value="2"/>
</dbReference>
<dbReference type="FunFam" id="3.90.1150.10:FF:000059">
    <property type="entry name" value="Glycine dehydrogenase (decarboxylating)"/>
    <property type="match status" value="1"/>
</dbReference>
<dbReference type="FunFam" id="3.40.640.10:FF:000005">
    <property type="entry name" value="Glycine dehydrogenase (decarboxylating), mitochondrial"/>
    <property type="match status" value="1"/>
</dbReference>
<dbReference type="FunFam" id="3.40.640.10:FF:000007">
    <property type="entry name" value="glycine dehydrogenase (Decarboxylating), mitochondrial"/>
    <property type="match status" value="1"/>
</dbReference>
<dbReference type="Gene3D" id="3.90.1150.10">
    <property type="entry name" value="Aspartate Aminotransferase, domain 1"/>
    <property type="match status" value="2"/>
</dbReference>
<dbReference type="Gene3D" id="3.40.640.10">
    <property type="entry name" value="Type I PLP-dependent aspartate aminotransferase-like (Major domain)"/>
    <property type="match status" value="2"/>
</dbReference>
<dbReference type="HAMAP" id="MF_00711">
    <property type="entry name" value="GcvP"/>
    <property type="match status" value="1"/>
</dbReference>
<dbReference type="InterPro" id="IPR003437">
    <property type="entry name" value="GcvP"/>
</dbReference>
<dbReference type="InterPro" id="IPR049316">
    <property type="entry name" value="GDC-P_C"/>
</dbReference>
<dbReference type="InterPro" id="IPR049315">
    <property type="entry name" value="GDC-P_N"/>
</dbReference>
<dbReference type="InterPro" id="IPR020581">
    <property type="entry name" value="GDC_P"/>
</dbReference>
<dbReference type="InterPro" id="IPR015424">
    <property type="entry name" value="PyrdxlP-dep_Trfase"/>
</dbReference>
<dbReference type="InterPro" id="IPR015421">
    <property type="entry name" value="PyrdxlP-dep_Trfase_major"/>
</dbReference>
<dbReference type="InterPro" id="IPR015422">
    <property type="entry name" value="PyrdxlP-dep_Trfase_small"/>
</dbReference>
<dbReference type="NCBIfam" id="TIGR00461">
    <property type="entry name" value="gcvP"/>
    <property type="match status" value="1"/>
</dbReference>
<dbReference type="PANTHER" id="PTHR11773:SF1">
    <property type="entry name" value="GLYCINE DEHYDROGENASE (DECARBOXYLATING), MITOCHONDRIAL"/>
    <property type="match status" value="1"/>
</dbReference>
<dbReference type="PANTHER" id="PTHR11773">
    <property type="entry name" value="GLYCINE DEHYDROGENASE, DECARBOXYLATING"/>
    <property type="match status" value="1"/>
</dbReference>
<dbReference type="Pfam" id="PF21478">
    <property type="entry name" value="GcvP2_C"/>
    <property type="match status" value="1"/>
</dbReference>
<dbReference type="Pfam" id="PF02347">
    <property type="entry name" value="GDC-P"/>
    <property type="match status" value="2"/>
</dbReference>
<dbReference type="SUPFAM" id="SSF53383">
    <property type="entry name" value="PLP-dependent transferases"/>
    <property type="match status" value="2"/>
</dbReference>